<name>MTGA_ECO5E</name>
<keyword id="KW-0997">Cell inner membrane</keyword>
<keyword id="KW-1003">Cell membrane</keyword>
<keyword id="KW-0133">Cell shape</keyword>
<keyword id="KW-0961">Cell wall biogenesis/degradation</keyword>
<keyword id="KW-0328">Glycosyltransferase</keyword>
<keyword id="KW-0472">Membrane</keyword>
<keyword id="KW-0573">Peptidoglycan synthesis</keyword>
<keyword id="KW-0808">Transferase</keyword>
<keyword id="KW-0812">Transmembrane</keyword>
<keyword id="KW-1133">Transmembrane helix</keyword>
<comment type="function">
    <text evidence="1">Peptidoglycan polymerase that catalyzes glycan chain elongation from lipid-linked precursors.</text>
</comment>
<comment type="catalytic activity">
    <reaction evidence="1">
        <text>[GlcNAc-(1-&gt;4)-Mur2Ac(oyl-L-Ala-gamma-D-Glu-L-Lys-D-Ala-D-Ala)](n)-di-trans,octa-cis-undecaprenyl diphosphate + beta-D-GlcNAc-(1-&gt;4)-Mur2Ac(oyl-L-Ala-gamma-D-Glu-L-Lys-D-Ala-D-Ala)-di-trans,octa-cis-undecaprenyl diphosphate = [GlcNAc-(1-&gt;4)-Mur2Ac(oyl-L-Ala-gamma-D-Glu-L-Lys-D-Ala-D-Ala)](n+1)-di-trans,octa-cis-undecaprenyl diphosphate + di-trans,octa-cis-undecaprenyl diphosphate + H(+)</text>
        <dbReference type="Rhea" id="RHEA:23708"/>
        <dbReference type="Rhea" id="RHEA-COMP:9602"/>
        <dbReference type="Rhea" id="RHEA-COMP:9603"/>
        <dbReference type="ChEBI" id="CHEBI:15378"/>
        <dbReference type="ChEBI" id="CHEBI:58405"/>
        <dbReference type="ChEBI" id="CHEBI:60033"/>
        <dbReference type="ChEBI" id="CHEBI:78435"/>
        <dbReference type="EC" id="2.4.99.28"/>
    </reaction>
</comment>
<comment type="pathway">
    <text evidence="1">Cell wall biogenesis; peptidoglycan biosynthesis.</text>
</comment>
<comment type="subcellular location">
    <subcellularLocation>
        <location evidence="1">Cell inner membrane</location>
        <topology evidence="1">Single-pass membrane protein</topology>
    </subcellularLocation>
</comment>
<comment type="similarity">
    <text evidence="1">Belongs to the glycosyltransferase 51 family.</text>
</comment>
<evidence type="ECO:0000255" key="1">
    <source>
        <dbReference type="HAMAP-Rule" id="MF_00766"/>
    </source>
</evidence>
<sequence length="242" mass="27269">MSKSRLTVFSFVRRFLLRLMVVLAVFWGGGIALFSVAPVPFSAVMVERQVSAWLHGNFRYVAHSDRVSMDQISPWMGLAVIAAEDQTFPEHWGFDVASIEKALAHNERNENRIRGASTISQQTAKNLFLWDGRSWVRKGLEAGLTLGIETVWSKKRILTVYLNIAEFGDGVFGVEAAAQRYFHKPASKLTRSEAALLAAVLPNPLRFKVSAPSGYVRSRQAWILRQMYQLGGEPFMQQHQLD</sequence>
<dbReference type="EC" id="2.4.99.28" evidence="1"/>
<dbReference type="EMBL" id="CP001164">
    <property type="protein sequence ID" value="ACI38137.1"/>
    <property type="molecule type" value="Genomic_DNA"/>
</dbReference>
<dbReference type="RefSeq" id="WP_000047079.1">
    <property type="nucleotide sequence ID" value="NC_011353.1"/>
</dbReference>
<dbReference type="SMR" id="B5YSU1"/>
<dbReference type="CAZy" id="GT51">
    <property type="family name" value="Glycosyltransferase Family 51"/>
</dbReference>
<dbReference type="KEGG" id="ecf:ECH74115_4529"/>
<dbReference type="HOGENOM" id="CLU_006354_1_1_6"/>
<dbReference type="UniPathway" id="UPA00219"/>
<dbReference type="GO" id="GO:0009274">
    <property type="term" value="C:peptidoglycan-based cell wall"/>
    <property type="evidence" value="ECO:0007669"/>
    <property type="project" value="InterPro"/>
</dbReference>
<dbReference type="GO" id="GO:0005886">
    <property type="term" value="C:plasma membrane"/>
    <property type="evidence" value="ECO:0007669"/>
    <property type="project" value="UniProtKB-SubCell"/>
</dbReference>
<dbReference type="GO" id="GO:0016763">
    <property type="term" value="F:pentosyltransferase activity"/>
    <property type="evidence" value="ECO:0007669"/>
    <property type="project" value="InterPro"/>
</dbReference>
<dbReference type="GO" id="GO:0008955">
    <property type="term" value="F:peptidoglycan glycosyltransferase activity"/>
    <property type="evidence" value="ECO:0007669"/>
    <property type="project" value="UniProtKB-UniRule"/>
</dbReference>
<dbReference type="GO" id="GO:0071555">
    <property type="term" value="P:cell wall organization"/>
    <property type="evidence" value="ECO:0007669"/>
    <property type="project" value="UniProtKB-KW"/>
</dbReference>
<dbReference type="GO" id="GO:0009252">
    <property type="term" value="P:peptidoglycan biosynthetic process"/>
    <property type="evidence" value="ECO:0007669"/>
    <property type="project" value="UniProtKB-UniRule"/>
</dbReference>
<dbReference type="GO" id="GO:0008360">
    <property type="term" value="P:regulation of cell shape"/>
    <property type="evidence" value="ECO:0007669"/>
    <property type="project" value="UniProtKB-KW"/>
</dbReference>
<dbReference type="FunFam" id="1.10.3810.10:FF:000004">
    <property type="entry name" value="Biosynthetic peptidoglycan transglycosylase"/>
    <property type="match status" value="1"/>
</dbReference>
<dbReference type="Gene3D" id="1.10.3810.10">
    <property type="entry name" value="Biosynthetic peptidoglycan transglycosylase-like"/>
    <property type="match status" value="1"/>
</dbReference>
<dbReference type="HAMAP" id="MF_00766">
    <property type="entry name" value="PGT_MtgA"/>
    <property type="match status" value="1"/>
</dbReference>
<dbReference type="InterPro" id="IPR001264">
    <property type="entry name" value="Glyco_trans_51"/>
</dbReference>
<dbReference type="InterPro" id="IPR023346">
    <property type="entry name" value="Lysozyme-like_dom_sf"/>
</dbReference>
<dbReference type="InterPro" id="IPR036950">
    <property type="entry name" value="PBP_transglycosylase"/>
</dbReference>
<dbReference type="InterPro" id="IPR011812">
    <property type="entry name" value="Pep_trsgly"/>
</dbReference>
<dbReference type="NCBIfam" id="TIGR02070">
    <property type="entry name" value="mono_pep_trsgly"/>
    <property type="match status" value="1"/>
</dbReference>
<dbReference type="PANTHER" id="PTHR30400:SF0">
    <property type="entry name" value="BIOSYNTHETIC PEPTIDOGLYCAN TRANSGLYCOSYLASE"/>
    <property type="match status" value="1"/>
</dbReference>
<dbReference type="PANTHER" id="PTHR30400">
    <property type="entry name" value="MONOFUNCTIONAL BIOSYNTHETIC PEPTIDOGLYCAN TRANSGLYCOSYLASE"/>
    <property type="match status" value="1"/>
</dbReference>
<dbReference type="Pfam" id="PF00912">
    <property type="entry name" value="Transgly"/>
    <property type="match status" value="1"/>
</dbReference>
<dbReference type="SUPFAM" id="SSF53955">
    <property type="entry name" value="Lysozyme-like"/>
    <property type="match status" value="1"/>
</dbReference>
<feature type="chain" id="PRO_1000133591" description="Biosynthetic peptidoglycan transglycosylase">
    <location>
        <begin position="1"/>
        <end position="242"/>
    </location>
</feature>
<feature type="transmembrane region" description="Helical" evidence="1">
    <location>
        <begin position="19"/>
        <end position="39"/>
    </location>
</feature>
<accession>B5YSU1</accession>
<proteinExistence type="inferred from homology"/>
<gene>
    <name evidence="1" type="primary">mtgA</name>
    <name type="ordered locus">ECH74115_4529</name>
</gene>
<organism>
    <name type="scientific">Escherichia coli O157:H7 (strain EC4115 / EHEC)</name>
    <dbReference type="NCBI Taxonomy" id="444450"/>
    <lineage>
        <taxon>Bacteria</taxon>
        <taxon>Pseudomonadati</taxon>
        <taxon>Pseudomonadota</taxon>
        <taxon>Gammaproteobacteria</taxon>
        <taxon>Enterobacterales</taxon>
        <taxon>Enterobacteriaceae</taxon>
        <taxon>Escherichia</taxon>
    </lineage>
</organism>
<protein>
    <recommendedName>
        <fullName evidence="1">Biosynthetic peptidoglycan transglycosylase</fullName>
        <ecNumber evidence="1">2.4.99.28</ecNumber>
    </recommendedName>
    <alternativeName>
        <fullName evidence="1">Glycan polymerase</fullName>
    </alternativeName>
    <alternativeName>
        <fullName evidence="1">Peptidoglycan glycosyltransferase MtgA</fullName>
        <shortName evidence="1">PGT</shortName>
    </alternativeName>
</protein>
<reference key="1">
    <citation type="journal article" date="2011" name="Proc. Natl. Acad. Sci. U.S.A.">
        <title>Genomic anatomy of Escherichia coli O157:H7 outbreaks.</title>
        <authorList>
            <person name="Eppinger M."/>
            <person name="Mammel M.K."/>
            <person name="Leclerc J.E."/>
            <person name="Ravel J."/>
            <person name="Cebula T.A."/>
        </authorList>
    </citation>
    <scope>NUCLEOTIDE SEQUENCE [LARGE SCALE GENOMIC DNA]</scope>
    <source>
        <strain>EC4115 / EHEC</strain>
    </source>
</reference>